<protein>
    <recommendedName>
        <fullName>MLO-like protein 15</fullName>
        <shortName>AtMlo15</shortName>
    </recommendedName>
</protein>
<accession>O80580</accession>
<feature type="chain" id="PRO_0000209945" description="MLO-like protein 15">
    <location>
        <begin position="1"/>
        <end position="496"/>
    </location>
</feature>
<feature type="topological domain" description="Extracellular" evidence="2">
    <location>
        <begin position="1"/>
        <end position="9"/>
    </location>
</feature>
<feature type="transmembrane region" description="Helical; Name=1" evidence="2">
    <location>
        <begin position="10"/>
        <end position="30"/>
    </location>
</feature>
<feature type="topological domain" description="Cytoplasmic" evidence="2">
    <location>
        <begin position="31"/>
        <end position="59"/>
    </location>
</feature>
<feature type="transmembrane region" description="Helical; Name=2" evidence="2">
    <location>
        <begin position="60"/>
        <end position="80"/>
    </location>
</feature>
<feature type="topological domain" description="Extracellular" evidence="2">
    <location>
        <begin position="81"/>
        <end position="147"/>
    </location>
</feature>
<feature type="transmembrane region" description="Helical; Name=3" evidence="2">
    <location>
        <begin position="148"/>
        <end position="168"/>
    </location>
</feature>
<feature type="topological domain" description="Cytoplasmic" evidence="2">
    <location>
        <begin position="169"/>
        <end position="269"/>
    </location>
</feature>
<feature type="transmembrane region" description="Helical; Name=4" evidence="2">
    <location>
        <begin position="270"/>
        <end position="290"/>
    </location>
</feature>
<feature type="topological domain" description="Extracellular" evidence="2">
    <location>
        <position position="291"/>
    </location>
</feature>
<feature type="transmembrane region" description="Helical; Name=5" evidence="2">
    <location>
        <begin position="292"/>
        <end position="312"/>
    </location>
</feature>
<feature type="topological domain" description="Cytoplasmic" evidence="2">
    <location>
        <begin position="313"/>
        <end position="355"/>
    </location>
</feature>
<feature type="transmembrane region" description="Helical; Name=6" evidence="2">
    <location>
        <begin position="356"/>
        <end position="376"/>
    </location>
</feature>
<feature type="topological domain" description="Extracellular" evidence="2">
    <location>
        <begin position="377"/>
        <end position="397"/>
    </location>
</feature>
<feature type="transmembrane region" description="Helical; Name=7" evidence="2">
    <location>
        <begin position="398"/>
        <end position="418"/>
    </location>
</feature>
<feature type="topological domain" description="Cytoplasmic" evidence="2">
    <location>
        <begin position="419"/>
        <end position="496"/>
    </location>
</feature>
<feature type="region of interest" description="Calmodulin-binding">
    <location>
        <begin position="432"/>
        <end position="453"/>
    </location>
</feature>
<feature type="region of interest" description="Disordered" evidence="3">
    <location>
        <begin position="454"/>
        <end position="496"/>
    </location>
</feature>
<feature type="compositionally biased region" description="Polar residues" evidence="3">
    <location>
        <begin position="455"/>
        <end position="485"/>
    </location>
</feature>
<feature type="compositionally biased region" description="Basic and acidic residues" evidence="3">
    <location>
        <begin position="486"/>
        <end position="496"/>
    </location>
</feature>
<organism>
    <name type="scientific">Arabidopsis thaliana</name>
    <name type="common">Mouse-ear cress</name>
    <dbReference type="NCBI Taxonomy" id="3702"/>
    <lineage>
        <taxon>Eukaryota</taxon>
        <taxon>Viridiplantae</taxon>
        <taxon>Streptophyta</taxon>
        <taxon>Embryophyta</taxon>
        <taxon>Tracheophyta</taxon>
        <taxon>Spermatophyta</taxon>
        <taxon>Magnoliopsida</taxon>
        <taxon>eudicotyledons</taxon>
        <taxon>Gunneridae</taxon>
        <taxon>Pentapetalae</taxon>
        <taxon>rosids</taxon>
        <taxon>malvids</taxon>
        <taxon>Brassicales</taxon>
        <taxon>Brassicaceae</taxon>
        <taxon>Camelineae</taxon>
        <taxon>Arabidopsis</taxon>
    </lineage>
</organism>
<reference key="1">
    <citation type="journal article" date="2003" name="J. Mol. Evol.">
        <title>Molecular phylogeny and evolution of the plant-specific seven-transmembrane MLO family.</title>
        <authorList>
            <person name="Devoto A."/>
            <person name="Hartmann H.A."/>
            <person name="Piffanelli P."/>
            <person name="Elliott C."/>
            <person name="Simmons C."/>
            <person name="Taramino G."/>
            <person name="Goh C.-S."/>
            <person name="Cohen F.E."/>
            <person name="Emerson B.C."/>
            <person name="Schulze-Lefert P."/>
            <person name="Panstruga R."/>
        </authorList>
    </citation>
    <scope>NUCLEOTIDE SEQUENCE [MRNA]</scope>
</reference>
<reference key="2">
    <citation type="journal article" date="1999" name="Nature">
        <title>Sequence and analysis of chromosome 2 of the plant Arabidopsis thaliana.</title>
        <authorList>
            <person name="Lin X."/>
            <person name="Kaul S."/>
            <person name="Rounsley S.D."/>
            <person name="Shea T.P."/>
            <person name="Benito M.-I."/>
            <person name="Town C.D."/>
            <person name="Fujii C.Y."/>
            <person name="Mason T.M."/>
            <person name="Bowman C.L."/>
            <person name="Barnstead M.E."/>
            <person name="Feldblyum T.V."/>
            <person name="Buell C.R."/>
            <person name="Ketchum K.A."/>
            <person name="Lee J.J."/>
            <person name="Ronning C.M."/>
            <person name="Koo H.L."/>
            <person name="Moffat K.S."/>
            <person name="Cronin L.A."/>
            <person name="Shen M."/>
            <person name="Pai G."/>
            <person name="Van Aken S."/>
            <person name="Umayam L."/>
            <person name="Tallon L.J."/>
            <person name="Gill J.E."/>
            <person name="Adams M.D."/>
            <person name="Carrera A.J."/>
            <person name="Creasy T.H."/>
            <person name="Goodman H.M."/>
            <person name="Somerville C.R."/>
            <person name="Copenhaver G.P."/>
            <person name="Preuss D."/>
            <person name="Nierman W.C."/>
            <person name="White O."/>
            <person name="Eisen J.A."/>
            <person name="Salzberg S.L."/>
            <person name="Fraser C.M."/>
            <person name="Venter J.C."/>
        </authorList>
    </citation>
    <scope>NUCLEOTIDE SEQUENCE [LARGE SCALE GENOMIC DNA]</scope>
    <source>
        <strain>cv. Columbia</strain>
    </source>
</reference>
<reference key="3">
    <citation type="journal article" date="2017" name="Plant J.">
        <title>Araport11: a complete reannotation of the Arabidopsis thaliana reference genome.</title>
        <authorList>
            <person name="Cheng C.Y."/>
            <person name="Krishnakumar V."/>
            <person name="Chan A.P."/>
            <person name="Thibaud-Nissen F."/>
            <person name="Schobel S."/>
            <person name="Town C.D."/>
        </authorList>
    </citation>
    <scope>GENOME REANNOTATION</scope>
    <source>
        <strain>cv. Columbia</strain>
    </source>
</reference>
<proteinExistence type="evidence at transcript level"/>
<sequence length="496" mass="56151">MAGGGTTLEYTPTWVVALVCSVIVSISFAVERLIHRAGKHFKNNDQKQLFGALQKIKEELMLVGFISLLLSVGQSKIAKICISKELSEKFLPCTKPAGAEKSLKDSSHFQFSFTGRHLLAGDAPAGDYCSLKGKVPIMSLSALHELHIFIFVLAVAHIIFCLLTIVFGTMKIKQWKKWEDKVLEKDFDTDQSIKKFTHVQEHEFIRSRFLGVGKADASLGWVQSFMKQFLASVNESDYITMRLGFVTTHCKTNPKFNFHKYLMRALNSDFKKVVGISWYLWVFVVLFLLLNIVAWHVYFWLAFIPLILLLAVGTKLEHIITDLAHEVAEKHIAVEGDLVVRPSDDLFWFQSPRLVLFLIHFILFQNSFEIAYFFFILFQFGWDSCIMDHVKFVIPRLVIGVIIQLLCSYSTLPLYALVTQMGSSFKGAIFNEQTQEHLVGWAKMAKRGVKKGATQVGTSHDATSPRPSIQLNSLLGKGSSQQNQNPKEKSEIAHHD</sequence>
<evidence type="ECO:0000250" key="1"/>
<evidence type="ECO:0000255" key="2"/>
<evidence type="ECO:0000256" key="3">
    <source>
        <dbReference type="SAM" id="MobiDB-lite"/>
    </source>
</evidence>
<evidence type="ECO:0000305" key="4"/>
<keyword id="KW-0025">Alternative splicing</keyword>
<keyword id="KW-0112">Calmodulin-binding</keyword>
<keyword id="KW-0472">Membrane</keyword>
<keyword id="KW-0568">Pathogenesis-related protein</keyword>
<keyword id="KW-0611">Plant defense</keyword>
<keyword id="KW-1185">Reference proteome</keyword>
<keyword id="KW-0812">Transmembrane</keyword>
<keyword id="KW-1133">Transmembrane helix</keyword>
<name>MLO15_ARATH</name>
<dbReference type="EMBL" id="AF369576">
    <property type="protein sequence ID" value="AAK53808.1"/>
    <property type="molecule type" value="mRNA"/>
</dbReference>
<dbReference type="EMBL" id="AC004005">
    <property type="protein sequence ID" value="AAC23431.1"/>
    <property type="molecule type" value="Genomic_DNA"/>
</dbReference>
<dbReference type="EMBL" id="CP002685">
    <property type="protein sequence ID" value="AEC10376.1"/>
    <property type="molecule type" value="Genomic_DNA"/>
</dbReference>
<dbReference type="PIR" id="T00691">
    <property type="entry name" value="T00691"/>
</dbReference>
<dbReference type="RefSeq" id="NP_181939.1">
    <molecule id="O80580-1"/>
    <property type="nucleotide sequence ID" value="NM_129974.1"/>
</dbReference>
<dbReference type="SMR" id="O80580"/>
<dbReference type="BioGRID" id="4353">
    <property type="interactions" value="7"/>
</dbReference>
<dbReference type="IntAct" id="O80580">
    <property type="interactions" value="7"/>
</dbReference>
<dbReference type="STRING" id="3702.O80580"/>
<dbReference type="PaxDb" id="3702-AT2G44110.2"/>
<dbReference type="EnsemblPlants" id="AT2G44110.1">
    <molecule id="O80580-1"/>
    <property type="protein sequence ID" value="AT2G44110.1"/>
    <property type="gene ID" value="AT2G44110"/>
</dbReference>
<dbReference type="GeneID" id="819017"/>
<dbReference type="Gramene" id="AT2G44110.1">
    <molecule id="O80580-1"/>
    <property type="protein sequence ID" value="AT2G44110.1"/>
    <property type="gene ID" value="AT2G44110"/>
</dbReference>
<dbReference type="KEGG" id="ath:AT2G44110"/>
<dbReference type="Araport" id="AT2G44110"/>
<dbReference type="TAIR" id="AT2G44110">
    <property type="gene designation" value="MLO15"/>
</dbReference>
<dbReference type="eggNOG" id="KOG0017">
    <property type="taxonomic scope" value="Eukaryota"/>
</dbReference>
<dbReference type="HOGENOM" id="CLU_024720_3_0_1"/>
<dbReference type="InParanoid" id="O80580"/>
<dbReference type="PhylomeDB" id="O80580"/>
<dbReference type="PRO" id="PR:O80580"/>
<dbReference type="Proteomes" id="UP000006548">
    <property type="component" value="Chromosome 2"/>
</dbReference>
<dbReference type="ExpressionAtlas" id="O80580">
    <property type="expression patterns" value="baseline and differential"/>
</dbReference>
<dbReference type="GO" id="GO:0016020">
    <property type="term" value="C:membrane"/>
    <property type="evidence" value="ECO:0007669"/>
    <property type="project" value="UniProtKB-SubCell"/>
</dbReference>
<dbReference type="GO" id="GO:0005516">
    <property type="term" value="F:calmodulin binding"/>
    <property type="evidence" value="ECO:0007669"/>
    <property type="project" value="UniProtKB-KW"/>
</dbReference>
<dbReference type="GO" id="GO:0006952">
    <property type="term" value="P:defense response"/>
    <property type="evidence" value="ECO:0007669"/>
    <property type="project" value="UniProtKB-KW"/>
</dbReference>
<dbReference type="InterPro" id="IPR004326">
    <property type="entry name" value="Mlo"/>
</dbReference>
<dbReference type="PANTHER" id="PTHR31942">
    <property type="entry name" value="MLO-LIKE PROTEIN 1"/>
    <property type="match status" value="1"/>
</dbReference>
<dbReference type="PANTHER" id="PTHR31942:SF74">
    <property type="entry name" value="MLO-LIKE PROTEIN 15"/>
    <property type="match status" value="1"/>
</dbReference>
<dbReference type="Pfam" id="PF03094">
    <property type="entry name" value="Mlo"/>
    <property type="match status" value="1"/>
</dbReference>
<gene>
    <name type="primary">MLO15</name>
    <name type="ordered locus">At2g44110</name>
    <name type="ORF">F6E13.24</name>
</gene>
<comment type="function">
    <text evidence="1">May be involved in modulation of pathogen defense and leaf cell death. Activity seems to be regulated by Ca(2+)-dependent calmodulin binding and seems not to require heterotrimeric G proteins (By similarity).</text>
</comment>
<comment type="subcellular location">
    <subcellularLocation>
        <location evidence="1">Membrane</location>
        <topology evidence="1">Multi-pass membrane protein</topology>
    </subcellularLocation>
</comment>
<comment type="alternative products">
    <event type="alternative splicing"/>
    <isoform>
        <id>O80580-1</id>
        <name>1</name>
        <sequence type="displayed"/>
    </isoform>
    <text>A number of isoforms are produced. According to EST sequences.</text>
</comment>
<comment type="domain">
    <text evidence="1">The C-terminus contains a calmodulin-binding domain, which binds calmodulin in a calcium-dependent fashion.</text>
</comment>
<comment type="similarity">
    <text evidence="4">Belongs to the MLO family.</text>
</comment>